<evidence type="ECO:0000255" key="1">
    <source>
        <dbReference type="HAMAP-Rule" id="MF_00040"/>
    </source>
</evidence>
<name>RRF_PROMA</name>
<feature type="chain" id="PRO_0000167515" description="Ribosome-recycling factor">
    <location>
        <begin position="1"/>
        <end position="182"/>
    </location>
</feature>
<proteinExistence type="inferred from homology"/>
<comment type="function">
    <text evidence="1">Responsible for the release of ribosomes from messenger RNA at the termination of protein biosynthesis. May increase the efficiency of translation by recycling ribosomes from one round of translation to another.</text>
</comment>
<comment type="subcellular location">
    <subcellularLocation>
        <location evidence="1">Cytoplasm</location>
    </subcellularLocation>
</comment>
<comment type="similarity">
    <text evidence="1">Belongs to the RRF family.</text>
</comment>
<keyword id="KW-0963">Cytoplasm</keyword>
<keyword id="KW-0648">Protein biosynthesis</keyword>
<keyword id="KW-1185">Reference proteome</keyword>
<organism>
    <name type="scientific">Prochlorococcus marinus (strain SARG / CCMP1375 / SS120)</name>
    <dbReference type="NCBI Taxonomy" id="167539"/>
    <lineage>
        <taxon>Bacteria</taxon>
        <taxon>Bacillati</taxon>
        <taxon>Cyanobacteriota</taxon>
        <taxon>Cyanophyceae</taxon>
        <taxon>Synechococcales</taxon>
        <taxon>Prochlorococcaceae</taxon>
        <taxon>Prochlorococcus</taxon>
    </lineage>
</organism>
<reference key="1">
    <citation type="journal article" date="2003" name="Proc. Natl. Acad. Sci. U.S.A.">
        <title>Genome sequence of the cyanobacterium Prochlorococcus marinus SS120, a nearly minimal oxyphototrophic genome.</title>
        <authorList>
            <person name="Dufresne A."/>
            <person name="Salanoubat M."/>
            <person name="Partensky F."/>
            <person name="Artiguenave F."/>
            <person name="Axmann I.M."/>
            <person name="Barbe V."/>
            <person name="Duprat S."/>
            <person name="Galperin M.Y."/>
            <person name="Koonin E.V."/>
            <person name="Le Gall F."/>
            <person name="Makarova K.S."/>
            <person name="Ostrowski M."/>
            <person name="Oztas S."/>
            <person name="Robert C."/>
            <person name="Rogozin I.B."/>
            <person name="Scanlan D.J."/>
            <person name="Tandeau de Marsac N."/>
            <person name="Weissenbach J."/>
            <person name="Wincker P."/>
            <person name="Wolf Y.I."/>
            <person name="Hess W.R."/>
        </authorList>
    </citation>
    <scope>NUCLEOTIDE SEQUENCE [LARGE SCALE GENOMIC DNA]</scope>
    <source>
        <strain>SARG / CCMP1375 / SS120</strain>
    </source>
</reference>
<gene>
    <name evidence="1" type="primary">frr</name>
    <name type="ordered locus">Pro_0521</name>
</gene>
<sequence length="182" mass="20567">MLTQEVELNMQKSVEACQRNFNTIRTGRANTSLLDRLTVEYYGADTPLKSLATISTPDSQTLAIQPFDLGSLGLIEKAISISDLGFTPNNDGKIIRINIPPLTEERRKQFCKLASKYAEEAKISLRNIRRDAIEKIKGSEKDGEFSEDQSRDQQDSIQKITNKYINEIEKNLSGKEEEILKV</sequence>
<dbReference type="EMBL" id="AE017126">
    <property type="protein sequence ID" value="AAP99566.1"/>
    <property type="molecule type" value="Genomic_DNA"/>
</dbReference>
<dbReference type="RefSeq" id="NP_874914.1">
    <property type="nucleotide sequence ID" value="NC_005042.1"/>
</dbReference>
<dbReference type="RefSeq" id="WP_011124675.1">
    <property type="nucleotide sequence ID" value="NC_005042.1"/>
</dbReference>
<dbReference type="SMR" id="Q7VD62"/>
<dbReference type="STRING" id="167539.Pro_0521"/>
<dbReference type="EnsemblBacteria" id="AAP99566">
    <property type="protein sequence ID" value="AAP99566"/>
    <property type="gene ID" value="Pro_0521"/>
</dbReference>
<dbReference type="KEGG" id="pma:Pro_0521"/>
<dbReference type="PATRIC" id="fig|167539.5.peg.535"/>
<dbReference type="eggNOG" id="COG0233">
    <property type="taxonomic scope" value="Bacteria"/>
</dbReference>
<dbReference type="HOGENOM" id="CLU_073981_2_0_3"/>
<dbReference type="OrthoDB" id="9804006at2"/>
<dbReference type="Proteomes" id="UP000001420">
    <property type="component" value="Chromosome"/>
</dbReference>
<dbReference type="GO" id="GO:0005737">
    <property type="term" value="C:cytoplasm"/>
    <property type="evidence" value="ECO:0007669"/>
    <property type="project" value="UniProtKB-SubCell"/>
</dbReference>
<dbReference type="GO" id="GO:0043023">
    <property type="term" value="F:ribosomal large subunit binding"/>
    <property type="evidence" value="ECO:0007669"/>
    <property type="project" value="TreeGrafter"/>
</dbReference>
<dbReference type="GO" id="GO:0006415">
    <property type="term" value="P:translational termination"/>
    <property type="evidence" value="ECO:0007669"/>
    <property type="project" value="UniProtKB-UniRule"/>
</dbReference>
<dbReference type="CDD" id="cd00520">
    <property type="entry name" value="RRF"/>
    <property type="match status" value="1"/>
</dbReference>
<dbReference type="FunFam" id="1.10.132.20:FF:000001">
    <property type="entry name" value="Ribosome-recycling factor"/>
    <property type="match status" value="1"/>
</dbReference>
<dbReference type="FunFam" id="3.30.1360.40:FF:000001">
    <property type="entry name" value="Ribosome-recycling factor"/>
    <property type="match status" value="1"/>
</dbReference>
<dbReference type="Gene3D" id="3.30.1360.40">
    <property type="match status" value="1"/>
</dbReference>
<dbReference type="Gene3D" id="1.10.132.20">
    <property type="entry name" value="Ribosome-recycling factor"/>
    <property type="match status" value="1"/>
</dbReference>
<dbReference type="HAMAP" id="MF_00040">
    <property type="entry name" value="RRF"/>
    <property type="match status" value="1"/>
</dbReference>
<dbReference type="InterPro" id="IPR002661">
    <property type="entry name" value="Ribosome_recyc_fac"/>
</dbReference>
<dbReference type="InterPro" id="IPR023584">
    <property type="entry name" value="Ribosome_recyc_fac_dom"/>
</dbReference>
<dbReference type="InterPro" id="IPR036191">
    <property type="entry name" value="RRF_sf"/>
</dbReference>
<dbReference type="NCBIfam" id="TIGR00496">
    <property type="entry name" value="frr"/>
    <property type="match status" value="1"/>
</dbReference>
<dbReference type="PANTHER" id="PTHR20982:SF3">
    <property type="entry name" value="MITOCHONDRIAL RIBOSOME RECYCLING FACTOR PSEUDO 1"/>
    <property type="match status" value="1"/>
</dbReference>
<dbReference type="PANTHER" id="PTHR20982">
    <property type="entry name" value="RIBOSOME RECYCLING FACTOR"/>
    <property type="match status" value="1"/>
</dbReference>
<dbReference type="Pfam" id="PF01765">
    <property type="entry name" value="RRF"/>
    <property type="match status" value="1"/>
</dbReference>
<dbReference type="SUPFAM" id="SSF55194">
    <property type="entry name" value="Ribosome recycling factor, RRF"/>
    <property type="match status" value="1"/>
</dbReference>
<accession>Q7VD62</accession>
<protein>
    <recommendedName>
        <fullName evidence="1">Ribosome-recycling factor</fullName>
        <shortName evidence="1">RRF</shortName>
    </recommendedName>
    <alternativeName>
        <fullName evidence="1">Ribosome-releasing factor</fullName>
    </alternativeName>
</protein>